<sequence>MAFQSPLTFNDEQLTVAQLKSQLDLFANAQKQAFLNHHPVTDLVLSRAEYMDLLLTRLWRYYGFSEIHNISLVAVGGYGRGELHPLSDIDILVLSKHKLPGELETKLSEFITLLWDLRLEVGHAVRTVEECAAIGREDLTVATNLQEARLLCGSENTFQDLKKVVLSDSFWPSETFYRAKIQEQRERHARYHDTTYNLEPDIKSTPGGLRDIHTLSWVARRHFGATSLLEMSRYGFLTDAEYRELVECQDFLWRVRFALHIELKRYDNRLTFAHQIQVAEHLGFKGEGNRGIEMMMKEFYRTLRRVAELNKMLLKLFDQAIINGGETEPAVIINEDFQRRGRLIEARKPALFQARPETILDMFLHIANDSTIDSVSPPTLRQLRTARRRLNKFLHTIPEAREKFMELVRHPNALHRAFSLMHKLGVLAAYLPQWSQIVGQMQFDLFHVYTVDEHSVRLLNHINTFSYAKNHDKHPICCEVYPRLQKKELLLLAAIFHDIGKGRGGDHSEIGEKEAYDFCIEHGLSKPEAKLVSWLVRHHLLMSVTAQRRDIYDPEVITEFAKQVRDEERLEYLVCLTVADICATNPELWNSWKRTLLAELFYSTQRALRRGLENPVDVRERIRHNQQLASALLRKEGFTAREIEVLWQRFKADYFLRHTHKQIAWHCEHILRMDNPEQPLVLMSKKATRGGTEVFVYTKDQHALFATVVAELDRRNFNVHDAQIMSSKDGYVLDTFMVLDQHGQAIDVDNHKAVIKHLMHVLADGRPTKVKTRRTPYKLQHFKVKTKVDFLPTKSKKRTLMELVALDTPGLLAITGATFADMGFNLHGAKITTIGERAEDLFILTSENGGRLSEEQELQLREKLIHNIAELAP</sequence>
<comment type="function">
    <text evidence="1">Modifies, by uridylylation and deuridylylation, the PII regulatory proteins (GlnB and homologs), in response to the nitrogen status of the cell that GlnD senses through the glutamine level. Under low glutamine levels, catalyzes the conversion of the PII proteins and UTP to PII-UMP and PPi, while under higher glutamine levels, GlnD hydrolyzes PII-UMP to PII and UMP (deuridylylation). Thus, controls uridylylation state and activity of the PII proteins, and plays an important role in the regulation of nitrogen assimilation and metabolism.</text>
</comment>
<comment type="catalytic activity">
    <reaction evidence="1">
        <text>[protein-PII]-L-tyrosine + UTP = [protein-PII]-uridylyl-L-tyrosine + diphosphate</text>
        <dbReference type="Rhea" id="RHEA:13673"/>
        <dbReference type="Rhea" id="RHEA-COMP:12147"/>
        <dbReference type="Rhea" id="RHEA-COMP:12148"/>
        <dbReference type="ChEBI" id="CHEBI:33019"/>
        <dbReference type="ChEBI" id="CHEBI:46398"/>
        <dbReference type="ChEBI" id="CHEBI:46858"/>
        <dbReference type="ChEBI" id="CHEBI:90602"/>
        <dbReference type="EC" id="2.7.7.59"/>
    </reaction>
</comment>
<comment type="catalytic activity">
    <reaction evidence="1">
        <text>[protein-PII]-uridylyl-L-tyrosine + H2O = [protein-PII]-L-tyrosine + UMP + H(+)</text>
        <dbReference type="Rhea" id="RHEA:48600"/>
        <dbReference type="Rhea" id="RHEA-COMP:12147"/>
        <dbReference type="Rhea" id="RHEA-COMP:12148"/>
        <dbReference type="ChEBI" id="CHEBI:15377"/>
        <dbReference type="ChEBI" id="CHEBI:15378"/>
        <dbReference type="ChEBI" id="CHEBI:46858"/>
        <dbReference type="ChEBI" id="CHEBI:57865"/>
        <dbReference type="ChEBI" id="CHEBI:90602"/>
    </reaction>
</comment>
<comment type="cofactor">
    <cofactor evidence="1">
        <name>Mg(2+)</name>
        <dbReference type="ChEBI" id="CHEBI:18420"/>
    </cofactor>
</comment>
<comment type="activity regulation">
    <text evidence="1">Uridylyltransferase (UTase) activity is inhibited by glutamine, while glutamine activates uridylyl-removing (UR) activity.</text>
</comment>
<comment type="domain">
    <text evidence="1">Has four distinct domains: an N-terminal nucleotidyltransferase (NT) domain responsible for UTase activity, a central HD domain that encodes UR activity, and two C-terminal ACT domains that seem to have a role in glutamine sensing.</text>
</comment>
<comment type="similarity">
    <text evidence="1">Belongs to the GlnD family.</text>
</comment>
<name>GLND_VIBVU</name>
<feature type="chain" id="PRO_0000192774" description="Bifunctional uridylyltransferase/uridylyl-removing enzyme">
    <location>
        <begin position="1"/>
        <end position="873"/>
    </location>
</feature>
<feature type="domain" description="HD" evidence="2">
    <location>
        <begin position="451"/>
        <end position="573"/>
    </location>
</feature>
<feature type="domain" description="ACT 1" evidence="1">
    <location>
        <begin position="693"/>
        <end position="773"/>
    </location>
</feature>
<feature type="domain" description="ACT 2" evidence="1">
    <location>
        <begin position="800"/>
        <end position="873"/>
    </location>
</feature>
<feature type="region of interest" description="Uridylyltransferase">
    <location>
        <begin position="1"/>
        <end position="332"/>
    </location>
</feature>
<feature type="region of interest" description="Uridylyl-removing">
    <location>
        <begin position="333"/>
        <end position="692"/>
    </location>
</feature>
<evidence type="ECO:0000255" key="1">
    <source>
        <dbReference type="HAMAP-Rule" id="MF_00277"/>
    </source>
</evidence>
<evidence type="ECO:0000255" key="2">
    <source>
        <dbReference type="PROSITE-ProRule" id="PRU01175"/>
    </source>
</evidence>
<protein>
    <recommendedName>
        <fullName evidence="1">Bifunctional uridylyltransferase/uridylyl-removing enzyme</fullName>
        <shortName evidence="1">UTase/UR</shortName>
    </recommendedName>
    <alternativeName>
        <fullName evidence="1">Bifunctional [protein-PII] modification enzyme</fullName>
    </alternativeName>
    <alternativeName>
        <fullName evidence="1">Bifunctional nitrogen sensor protein</fullName>
    </alternativeName>
    <domain>
        <recommendedName>
            <fullName evidence="1">[Protein-PII] uridylyltransferase</fullName>
            <shortName evidence="1">PII uridylyltransferase</shortName>
            <shortName evidence="1">UTase</shortName>
            <ecNumber evidence="1">2.7.7.59</ecNumber>
        </recommendedName>
    </domain>
    <domain>
        <recommendedName>
            <fullName evidence="1">[Protein-PII]-UMP uridylyl-removing enzyme</fullName>
            <shortName evidence="1">UR</shortName>
            <ecNumber evidence="1">3.1.4.-</ecNumber>
        </recommendedName>
    </domain>
</protein>
<accession>Q8DBG3</accession>
<gene>
    <name evidence="1" type="primary">glnD</name>
    <name type="ordered locus">VV1_1857</name>
</gene>
<dbReference type="EC" id="2.7.7.59" evidence="1"/>
<dbReference type="EC" id="3.1.4.-" evidence="1"/>
<dbReference type="EMBL" id="AE016795">
    <property type="protein sequence ID" value="AAO10260.1"/>
    <property type="molecule type" value="Genomic_DNA"/>
</dbReference>
<dbReference type="RefSeq" id="WP_011079760.1">
    <property type="nucleotide sequence ID" value="NC_004459.3"/>
</dbReference>
<dbReference type="SMR" id="Q8DBG3"/>
<dbReference type="KEGG" id="vvu:VV1_1857"/>
<dbReference type="HOGENOM" id="CLU_012833_0_0_6"/>
<dbReference type="Proteomes" id="UP000002275">
    <property type="component" value="Chromosome 1"/>
</dbReference>
<dbReference type="GO" id="GO:0008773">
    <property type="term" value="F:[protein-PII] uridylyltransferase activity"/>
    <property type="evidence" value="ECO:0007669"/>
    <property type="project" value="UniProtKB-UniRule"/>
</dbReference>
<dbReference type="GO" id="GO:0008081">
    <property type="term" value="F:phosphoric diester hydrolase activity"/>
    <property type="evidence" value="ECO:0007669"/>
    <property type="project" value="UniProtKB-UniRule"/>
</dbReference>
<dbReference type="GO" id="GO:0006808">
    <property type="term" value="P:regulation of nitrogen utilization"/>
    <property type="evidence" value="ECO:0007669"/>
    <property type="project" value="UniProtKB-UniRule"/>
</dbReference>
<dbReference type="CDD" id="cd04899">
    <property type="entry name" value="ACT_ACR-UUR-like_2"/>
    <property type="match status" value="1"/>
</dbReference>
<dbReference type="CDD" id="cd04900">
    <property type="entry name" value="ACT_UUR-like_1"/>
    <property type="match status" value="1"/>
</dbReference>
<dbReference type="CDD" id="cd00077">
    <property type="entry name" value="HDc"/>
    <property type="match status" value="1"/>
</dbReference>
<dbReference type="CDD" id="cd05401">
    <property type="entry name" value="NT_GlnE_GlnD_like"/>
    <property type="match status" value="1"/>
</dbReference>
<dbReference type="Gene3D" id="3.30.460.10">
    <property type="entry name" value="Beta Polymerase, domain 2"/>
    <property type="match status" value="1"/>
</dbReference>
<dbReference type="Gene3D" id="1.10.3090.10">
    <property type="entry name" value="cca-adding enzyme, domain 2"/>
    <property type="match status" value="1"/>
</dbReference>
<dbReference type="HAMAP" id="MF_00277">
    <property type="entry name" value="PII_uridylyl_transf"/>
    <property type="match status" value="1"/>
</dbReference>
<dbReference type="InterPro" id="IPR045865">
    <property type="entry name" value="ACT-like_dom_sf"/>
</dbReference>
<dbReference type="InterPro" id="IPR002912">
    <property type="entry name" value="ACT_dom"/>
</dbReference>
<dbReference type="InterPro" id="IPR003607">
    <property type="entry name" value="HD/PDEase_dom"/>
</dbReference>
<dbReference type="InterPro" id="IPR006674">
    <property type="entry name" value="HD_domain"/>
</dbReference>
<dbReference type="InterPro" id="IPR043519">
    <property type="entry name" value="NT_sf"/>
</dbReference>
<dbReference type="InterPro" id="IPR013546">
    <property type="entry name" value="PII_UdlTrfase/GS_AdlTrfase"/>
</dbReference>
<dbReference type="InterPro" id="IPR002934">
    <property type="entry name" value="Polymerase_NTP_transf_dom"/>
</dbReference>
<dbReference type="InterPro" id="IPR010043">
    <property type="entry name" value="UTase/UR"/>
</dbReference>
<dbReference type="NCBIfam" id="NF002487">
    <property type="entry name" value="PRK01759.1"/>
    <property type="match status" value="1"/>
</dbReference>
<dbReference type="NCBIfam" id="NF003448">
    <property type="entry name" value="PRK05007.1"/>
    <property type="match status" value="1"/>
</dbReference>
<dbReference type="NCBIfam" id="TIGR01693">
    <property type="entry name" value="UTase_glnD"/>
    <property type="match status" value="1"/>
</dbReference>
<dbReference type="PANTHER" id="PTHR47320">
    <property type="entry name" value="BIFUNCTIONAL URIDYLYLTRANSFERASE/URIDYLYL-REMOVING ENZYME"/>
    <property type="match status" value="1"/>
</dbReference>
<dbReference type="PANTHER" id="PTHR47320:SF1">
    <property type="entry name" value="BIFUNCTIONAL URIDYLYLTRANSFERASE_URIDYLYL-REMOVING ENZYME"/>
    <property type="match status" value="1"/>
</dbReference>
<dbReference type="Pfam" id="PF08335">
    <property type="entry name" value="GlnD_UR_UTase"/>
    <property type="match status" value="1"/>
</dbReference>
<dbReference type="Pfam" id="PF01966">
    <property type="entry name" value="HD"/>
    <property type="match status" value="1"/>
</dbReference>
<dbReference type="Pfam" id="PF01909">
    <property type="entry name" value="NTP_transf_2"/>
    <property type="match status" value="1"/>
</dbReference>
<dbReference type="PIRSF" id="PIRSF006288">
    <property type="entry name" value="PII_uridyltransf"/>
    <property type="match status" value="1"/>
</dbReference>
<dbReference type="SMART" id="SM00471">
    <property type="entry name" value="HDc"/>
    <property type="match status" value="1"/>
</dbReference>
<dbReference type="SUPFAM" id="SSF55021">
    <property type="entry name" value="ACT-like"/>
    <property type="match status" value="2"/>
</dbReference>
<dbReference type="SUPFAM" id="SSF109604">
    <property type="entry name" value="HD-domain/PDEase-like"/>
    <property type="match status" value="1"/>
</dbReference>
<dbReference type="SUPFAM" id="SSF81301">
    <property type="entry name" value="Nucleotidyltransferase"/>
    <property type="match status" value="1"/>
</dbReference>
<dbReference type="SUPFAM" id="SSF81593">
    <property type="entry name" value="Nucleotidyltransferase substrate binding subunit/domain"/>
    <property type="match status" value="1"/>
</dbReference>
<dbReference type="PROSITE" id="PS51671">
    <property type="entry name" value="ACT"/>
    <property type="match status" value="2"/>
</dbReference>
<dbReference type="PROSITE" id="PS51831">
    <property type="entry name" value="HD"/>
    <property type="match status" value="1"/>
</dbReference>
<reference key="1">
    <citation type="submission" date="2002-12" db="EMBL/GenBank/DDBJ databases">
        <title>Complete genome sequence of Vibrio vulnificus CMCP6.</title>
        <authorList>
            <person name="Rhee J.H."/>
            <person name="Kim S.Y."/>
            <person name="Chung S.S."/>
            <person name="Kim J.J."/>
            <person name="Moon Y.H."/>
            <person name="Jeong H."/>
            <person name="Choy H.E."/>
        </authorList>
    </citation>
    <scope>NUCLEOTIDE SEQUENCE [LARGE SCALE GENOMIC DNA]</scope>
    <source>
        <strain>CMCP6</strain>
    </source>
</reference>
<organism>
    <name type="scientific">Vibrio vulnificus (strain CMCP6)</name>
    <dbReference type="NCBI Taxonomy" id="216895"/>
    <lineage>
        <taxon>Bacteria</taxon>
        <taxon>Pseudomonadati</taxon>
        <taxon>Pseudomonadota</taxon>
        <taxon>Gammaproteobacteria</taxon>
        <taxon>Vibrionales</taxon>
        <taxon>Vibrionaceae</taxon>
        <taxon>Vibrio</taxon>
    </lineage>
</organism>
<proteinExistence type="inferred from homology"/>
<keyword id="KW-0378">Hydrolase</keyword>
<keyword id="KW-0460">Magnesium</keyword>
<keyword id="KW-0511">Multifunctional enzyme</keyword>
<keyword id="KW-0548">Nucleotidyltransferase</keyword>
<keyword id="KW-0677">Repeat</keyword>
<keyword id="KW-0808">Transferase</keyword>